<sequence>MDTSPSRKYPVKKRVKIHPNTVMVKYTSHYPQPGDDGYEEINEGYGNFMEENPKKGLLSEMKKKGRAFFGTMDTLPPPTEDPMINEIGQFQSFAEKNIFQSRKMWIVLFGSALAHGCVALITRLVSDRSKVPSLELIFIRSVFQVLSVLVVCYYQEAPFGPSGYRLRLFFYGVCNVISITCAYTSFSIVPPSNGTTMWRATTTVFSAILAFLLVDEKMAYVDMATVVCSILGVCLVMIPNIVDEDNSLLNAWKEAFGYTMTVMAGLTTALSMIVYRSIKEKISMWTALFTFGWTGTIWGISTMFILQEPIIPLDGETWSYLIAICVCSTAAFLGVYYALDKFHPALVSTVQHLEIVVAMVLQLLVLHIFPSIYDVFGGVIIMISVFVLAGYKLYWRNLRKQDYQEILDSPIK</sequence>
<dbReference type="EMBL" id="AL136661">
    <property type="protein sequence ID" value="CAB66596.1"/>
    <property type="molecule type" value="mRNA"/>
</dbReference>
<dbReference type="EMBL" id="AK314079">
    <property type="protein sequence ID" value="BAG36777.1"/>
    <property type="molecule type" value="mRNA"/>
</dbReference>
<dbReference type="EMBL" id="AC011597">
    <property type="status" value="NOT_ANNOTATED_CDS"/>
    <property type="molecule type" value="Genomic_DNA"/>
</dbReference>
<dbReference type="EMBL" id="AC096992">
    <property type="status" value="NOT_ANNOTATED_CDS"/>
    <property type="molecule type" value="Genomic_DNA"/>
</dbReference>
<dbReference type="EMBL" id="CH471052">
    <property type="protein sequence ID" value="EAW79111.1"/>
    <property type="molecule type" value="Genomic_DNA"/>
</dbReference>
<dbReference type="EMBL" id="CH471052">
    <property type="protein sequence ID" value="EAW79112.1"/>
    <property type="molecule type" value="Genomic_DNA"/>
</dbReference>
<dbReference type="EMBL" id="CH471052">
    <property type="protein sequence ID" value="EAW79113.1"/>
    <property type="molecule type" value="Genomic_DNA"/>
</dbReference>
<dbReference type="EMBL" id="BC000111">
    <property type="protein sequence ID" value="AAH00111.1"/>
    <property type="status" value="ALT_INIT"/>
    <property type="molecule type" value="mRNA"/>
</dbReference>
<dbReference type="EMBL" id="BC022557">
    <property type="protein sequence ID" value="AAH22557.1"/>
    <property type="molecule type" value="mRNA"/>
</dbReference>
<dbReference type="CCDS" id="CCDS3091.1"/>
<dbReference type="RefSeq" id="NP_001091068.1">
    <property type="nucleotide sequence ID" value="NM_001097599.2"/>
</dbReference>
<dbReference type="RefSeq" id="NP_001091069.1">
    <property type="nucleotide sequence ID" value="NM_001097600.2"/>
</dbReference>
<dbReference type="RefSeq" id="NP_079522.2">
    <property type="nucleotide sequence ID" value="NM_025246.3"/>
</dbReference>
<dbReference type="RefSeq" id="XP_006713836.1">
    <property type="nucleotide sequence ID" value="XM_006713773.5"/>
</dbReference>
<dbReference type="RefSeq" id="XP_011511516.1">
    <property type="nucleotide sequence ID" value="XM_011513214.3"/>
</dbReference>
<dbReference type="RefSeq" id="XP_016862778.1">
    <property type="nucleotide sequence ID" value="XM_017007289.2"/>
</dbReference>
<dbReference type="RefSeq" id="XP_016862779.1">
    <property type="nucleotide sequence ID" value="XM_017007290.2"/>
</dbReference>
<dbReference type="RefSeq" id="XP_016862780.1">
    <property type="nucleotide sequence ID" value="XM_017007291.2"/>
</dbReference>
<dbReference type="RefSeq" id="XP_047304983.1">
    <property type="nucleotide sequence ID" value="XM_047449027.1"/>
</dbReference>
<dbReference type="SMR" id="Q8TBE7"/>
<dbReference type="BioGRID" id="123273">
    <property type="interactions" value="24"/>
</dbReference>
<dbReference type="FunCoup" id="Q8TBE7">
    <property type="interactions" value="624"/>
</dbReference>
<dbReference type="IntAct" id="Q8TBE7">
    <property type="interactions" value="21"/>
</dbReference>
<dbReference type="STRING" id="9606.ENSP00000400839"/>
<dbReference type="TCDB" id="2.A.7.28.2">
    <property type="family name" value="the drug/metabolite transporter (dmt) superfamily"/>
</dbReference>
<dbReference type="iPTMnet" id="Q8TBE7"/>
<dbReference type="PhosphoSitePlus" id="Q8TBE7"/>
<dbReference type="BioMuta" id="SLC35G2"/>
<dbReference type="DMDM" id="317373497"/>
<dbReference type="jPOST" id="Q8TBE7"/>
<dbReference type="MassIVE" id="Q8TBE7"/>
<dbReference type="PaxDb" id="9606-ENSP00000400839"/>
<dbReference type="PeptideAtlas" id="Q8TBE7"/>
<dbReference type="ProteomicsDB" id="74001"/>
<dbReference type="Antibodypedia" id="62894">
    <property type="antibodies" value="49 antibodies from 13 providers"/>
</dbReference>
<dbReference type="DNASU" id="80723"/>
<dbReference type="Ensembl" id="ENST00000393079.3">
    <property type="protein sequence ID" value="ENSP00000376794.3"/>
    <property type="gene ID" value="ENSG00000168917.9"/>
</dbReference>
<dbReference type="Ensembl" id="ENST00000446465.3">
    <property type="protein sequence ID" value="ENSP00000400839.2"/>
    <property type="gene ID" value="ENSG00000168917.9"/>
</dbReference>
<dbReference type="GeneID" id="80723"/>
<dbReference type="KEGG" id="hsa:80723"/>
<dbReference type="MANE-Select" id="ENST00000446465.3">
    <property type="protein sequence ID" value="ENSP00000400839.2"/>
    <property type="RefSeq nucleotide sequence ID" value="NM_025246.3"/>
    <property type="RefSeq protein sequence ID" value="NP_079522.2"/>
</dbReference>
<dbReference type="UCSC" id="uc003erf.5">
    <property type="organism name" value="human"/>
</dbReference>
<dbReference type="AGR" id="HGNC:28480"/>
<dbReference type="CTD" id="80723"/>
<dbReference type="DisGeNET" id="80723"/>
<dbReference type="GeneCards" id="SLC35G2"/>
<dbReference type="HGNC" id="HGNC:28480">
    <property type="gene designation" value="SLC35G2"/>
</dbReference>
<dbReference type="HPA" id="ENSG00000168917">
    <property type="expression patterns" value="Low tissue specificity"/>
</dbReference>
<dbReference type="MIM" id="617812">
    <property type="type" value="gene"/>
</dbReference>
<dbReference type="neXtProt" id="NX_Q8TBE7"/>
<dbReference type="OpenTargets" id="ENSG00000168917"/>
<dbReference type="PharmGKB" id="PA134946375"/>
<dbReference type="VEuPathDB" id="HostDB:ENSG00000168917"/>
<dbReference type="eggNOG" id="ENOG502QV4H">
    <property type="taxonomic scope" value="Eukaryota"/>
</dbReference>
<dbReference type="GeneTree" id="ENSGT00940000153249"/>
<dbReference type="HOGENOM" id="CLU_055637_0_0_1"/>
<dbReference type="InParanoid" id="Q8TBE7"/>
<dbReference type="OMA" id="CYHHEPP"/>
<dbReference type="OrthoDB" id="306876at2759"/>
<dbReference type="PAN-GO" id="Q8TBE7">
    <property type="GO annotations" value="2 GO annotations based on evolutionary models"/>
</dbReference>
<dbReference type="PhylomeDB" id="Q8TBE7"/>
<dbReference type="TreeFam" id="TF331838"/>
<dbReference type="PathwayCommons" id="Q8TBE7"/>
<dbReference type="SignaLink" id="Q8TBE7"/>
<dbReference type="BioGRID-ORCS" id="80723">
    <property type="hits" value="11 hits in 1151 CRISPR screens"/>
</dbReference>
<dbReference type="ChiTaRS" id="SLC35G2">
    <property type="organism name" value="human"/>
</dbReference>
<dbReference type="GeneWiki" id="TMEM22"/>
<dbReference type="GenomeRNAi" id="80723"/>
<dbReference type="Pharos" id="Q8TBE7">
    <property type="development level" value="Tdark"/>
</dbReference>
<dbReference type="PRO" id="PR:Q8TBE7"/>
<dbReference type="Proteomes" id="UP000005640">
    <property type="component" value="Chromosome 3"/>
</dbReference>
<dbReference type="RNAct" id="Q8TBE7">
    <property type="molecule type" value="protein"/>
</dbReference>
<dbReference type="Bgee" id="ENSG00000168917">
    <property type="expression patterns" value="Expressed in sperm and 152 other cell types or tissues"/>
</dbReference>
<dbReference type="GO" id="GO:0005794">
    <property type="term" value="C:Golgi apparatus"/>
    <property type="evidence" value="ECO:0000314"/>
    <property type="project" value="LIFEdb"/>
</dbReference>
<dbReference type="GO" id="GO:0005886">
    <property type="term" value="C:plasma membrane"/>
    <property type="evidence" value="ECO:0000314"/>
    <property type="project" value="UniProtKB"/>
</dbReference>
<dbReference type="GO" id="GO:0030672">
    <property type="term" value="C:synaptic vesicle membrane"/>
    <property type="evidence" value="ECO:0000314"/>
    <property type="project" value="UniProtKB"/>
</dbReference>
<dbReference type="InterPro" id="IPR000620">
    <property type="entry name" value="EamA_dom"/>
</dbReference>
<dbReference type="PANTHER" id="PTHR22911">
    <property type="entry name" value="ACYL-MALONYL CONDENSING ENZYME-RELATED"/>
    <property type="match status" value="1"/>
</dbReference>
<dbReference type="PANTHER" id="PTHR22911:SF52">
    <property type="entry name" value="SOLUTE CARRIER FAMILY 35 MEMBER G2"/>
    <property type="match status" value="1"/>
</dbReference>
<dbReference type="Pfam" id="PF00892">
    <property type="entry name" value="EamA"/>
    <property type="match status" value="2"/>
</dbReference>
<dbReference type="SUPFAM" id="SSF103481">
    <property type="entry name" value="Multidrug resistance efflux transporter EmrE"/>
    <property type="match status" value="2"/>
</dbReference>
<comment type="subunit">
    <text evidence="4">Interacts with RAB37.</text>
</comment>
<comment type="interaction">
    <interactant intactId="EBI-727304">
        <id>Q8TBE7</id>
    </interactant>
    <interactant intactId="EBI-13059134">
        <id>Q13520</id>
        <label>AQP6</label>
    </interactant>
    <organismsDiffer>false</organismsDiffer>
    <experiments>3</experiments>
</comment>
<comment type="interaction">
    <interactant intactId="EBI-727304">
        <id>Q8TBE7</id>
    </interactant>
    <interactant intactId="EBI-11143782">
        <id>Q9BVC3</id>
        <label>DSCC1</label>
    </interactant>
    <organismsDiffer>false</organismsDiffer>
    <experiments>2</experiments>
</comment>
<comment type="interaction">
    <interactant intactId="EBI-727304">
        <id>Q8TBE7</id>
    </interactant>
    <interactant intactId="EBI-18304435">
        <id>Q5JX71</id>
        <label>FAM209A</label>
    </interactant>
    <organismsDiffer>false</organismsDiffer>
    <experiments>3</experiments>
</comment>
<comment type="interaction">
    <interactant intactId="EBI-727304">
        <id>Q8TBE7</id>
    </interactant>
    <interactant intactId="EBI-18159983">
        <id>Q3KNW5</id>
        <label>SLC10A6</label>
    </interactant>
    <organismsDiffer>false</organismsDiffer>
    <experiments>3</experiments>
</comment>
<comment type="interaction">
    <interactant intactId="EBI-727304">
        <id>Q8TBE7</id>
    </interactant>
    <interactant intactId="EBI-2548832">
        <id>Q8N661</id>
        <label>TMEM86B</label>
    </interactant>
    <organismsDiffer>false</organismsDiffer>
    <experiments>3</experiments>
</comment>
<comment type="subcellular location">
    <subcellularLocation>
        <location evidence="4">Cell membrane</location>
        <topology evidence="4">Multi-pass membrane protein</topology>
    </subcellularLocation>
    <subcellularLocation>
        <location evidence="5">Cytoplasmic vesicle</location>
        <location evidence="5">Secretory vesicle</location>
        <location evidence="5">Synaptic vesicle membrane</location>
        <topology evidence="4">Multi-pass membrane protein</topology>
    </subcellularLocation>
</comment>
<comment type="similarity">
    <text evidence="8">Belongs to the SLC35G solute transporter family.</text>
</comment>
<comment type="sequence caution" evidence="8">
    <conflict type="erroneous initiation">
        <sequence resource="EMBL-CDS" id="AAH00111"/>
    </conflict>
    <text>Truncated N-terminus.</text>
</comment>
<gene>
    <name evidence="10" type="primary">SLC35G2</name>
    <name evidence="7" type="synonym">TMEM22</name>
</gene>
<accession>Q8TBE7</accession>
<accession>B2RA80</accession>
<accession>D3DNE1</accession>
<accession>Q9BWN4</accession>
<accession>Q9H0S6</accession>
<name>S35G2_HUMAN</name>
<protein>
    <recommendedName>
        <fullName evidence="10">Solute carrier family 35 member G2</fullName>
    </recommendedName>
    <alternativeName>
        <fullName evidence="7">Transmembrane protein 22</fullName>
    </alternativeName>
</protein>
<proteinExistence type="evidence at protein level"/>
<feature type="chain" id="PRO_0000244465" description="Solute carrier family 35 member G2">
    <location>
        <begin position="1"/>
        <end position="412"/>
    </location>
</feature>
<feature type="topological domain" description="Cytoplasmic" evidence="4">
    <location>
        <begin position="1"/>
        <end position="104"/>
    </location>
</feature>
<feature type="transmembrane region" description="Helical; Name=1" evidence="1">
    <location>
        <begin position="105"/>
        <end position="125"/>
    </location>
</feature>
<feature type="topological domain" description="Extracellular" evidence="9">
    <location>
        <begin position="126"/>
        <end position="130"/>
    </location>
</feature>
<feature type="transmembrane region" description="Helical; Name=2" evidence="1">
    <location>
        <begin position="131"/>
        <end position="151"/>
    </location>
</feature>
<feature type="topological domain" description="Cytoplasmic" evidence="9">
    <location>
        <begin position="152"/>
        <end position="168"/>
    </location>
</feature>
<feature type="transmembrane region" description="Helical; Name=3" evidence="1">
    <location>
        <begin position="169"/>
        <end position="189"/>
    </location>
</feature>
<feature type="topological domain" description="Extracellular" evidence="9">
    <location>
        <begin position="190"/>
        <end position="193"/>
    </location>
</feature>
<feature type="transmembrane region" description="Helical; Name=4" evidence="1">
    <location>
        <begin position="194"/>
        <end position="214"/>
    </location>
</feature>
<feature type="topological domain" description="Cytoplasmic" evidence="9">
    <location>
        <begin position="215"/>
        <end position="217"/>
    </location>
</feature>
<feature type="transmembrane region" description="Helical; Name=5" evidence="1">
    <location>
        <begin position="218"/>
        <end position="238"/>
    </location>
</feature>
<feature type="topological domain" description="Extracellular" evidence="9">
    <location>
        <begin position="239"/>
        <end position="254"/>
    </location>
</feature>
<feature type="transmembrane region" description="Helical; Name=6" evidence="1">
    <location>
        <begin position="255"/>
        <end position="275"/>
    </location>
</feature>
<feature type="topological domain" description="Cytoplasmic" evidence="9">
    <location>
        <begin position="276"/>
        <end position="285"/>
    </location>
</feature>
<feature type="transmembrane region" description="Helical; Name=7" evidence="1">
    <location>
        <begin position="286"/>
        <end position="306"/>
    </location>
</feature>
<feature type="topological domain" description="Extracellular" evidence="9">
    <location>
        <begin position="307"/>
        <end position="318"/>
    </location>
</feature>
<feature type="transmembrane region" description="Helical; Name=8" evidence="1">
    <location>
        <begin position="319"/>
        <end position="339"/>
    </location>
</feature>
<feature type="topological domain" description="Cytoplasmic" evidence="9">
    <location>
        <begin position="340"/>
        <end position="345"/>
    </location>
</feature>
<feature type="transmembrane region" description="Helical; Name=9" evidence="1">
    <location>
        <begin position="346"/>
        <end position="366"/>
    </location>
</feature>
<feature type="topological domain" description="Extracellular" evidence="9">
    <location>
        <position position="367"/>
    </location>
</feature>
<feature type="transmembrane region" description="Helical; Name=10" evidence="1">
    <location>
        <begin position="368"/>
        <end position="388"/>
    </location>
</feature>
<feature type="topological domain" description="Cytoplasmic" evidence="4">
    <location>
        <begin position="389"/>
        <end position="412"/>
    </location>
</feature>
<feature type="domain" description="EamA 1" evidence="1">
    <location>
        <begin position="119"/>
        <end position="237"/>
    </location>
</feature>
<feature type="domain" description="EamA 2" evidence="1">
    <location>
        <begin position="268"/>
        <end position="388"/>
    </location>
</feature>
<feature type="modified residue" description="Phosphoserine" evidence="11 12 13">
    <location>
        <position position="409"/>
    </location>
</feature>
<feature type="sequence variant" id="VAR_026907" description="In dbSNP:rs1052618." evidence="2 3 6 11 12 13">
    <original>K</original>
    <variation>R</variation>
    <location>
        <position position="400"/>
    </location>
</feature>
<feature type="sequence conflict" description="In Ref. 5; AAH22557." evidence="8" ref="5">
    <original>Q</original>
    <variation>E</variation>
    <location>
        <position position="155"/>
    </location>
</feature>
<keyword id="KW-1003">Cell membrane</keyword>
<keyword id="KW-0968">Cytoplasmic vesicle</keyword>
<keyword id="KW-0472">Membrane</keyword>
<keyword id="KW-0597">Phosphoprotein</keyword>
<keyword id="KW-1267">Proteomics identification</keyword>
<keyword id="KW-1185">Reference proteome</keyword>
<keyword id="KW-0677">Repeat</keyword>
<keyword id="KW-0770">Synapse</keyword>
<keyword id="KW-0812">Transmembrane</keyword>
<keyword id="KW-1133">Transmembrane helix</keyword>
<evidence type="ECO:0000255" key="1"/>
<evidence type="ECO:0000269" key="2">
    <source>
    </source>
</evidence>
<evidence type="ECO:0000269" key="3">
    <source>
    </source>
</evidence>
<evidence type="ECO:0000269" key="4">
    <source>
    </source>
</evidence>
<evidence type="ECO:0000269" key="5">
    <source>
    </source>
</evidence>
<evidence type="ECO:0000269" key="6">
    <source ref="4"/>
</evidence>
<evidence type="ECO:0000303" key="7">
    <source>
    </source>
</evidence>
<evidence type="ECO:0000305" key="8"/>
<evidence type="ECO:0000305" key="9">
    <source>
    </source>
</evidence>
<evidence type="ECO:0000312" key="10">
    <source>
        <dbReference type="HGNC" id="HGNC:28480"/>
    </source>
</evidence>
<evidence type="ECO:0007744" key="11">
    <source>
    </source>
</evidence>
<evidence type="ECO:0007744" key="12">
    <source>
    </source>
</evidence>
<evidence type="ECO:0007744" key="13">
    <source>
    </source>
</evidence>
<organism>
    <name type="scientific">Homo sapiens</name>
    <name type="common">Human</name>
    <dbReference type="NCBI Taxonomy" id="9606"/>
    <lineage>
        <taxon>Eukaryota</taxon>
        <taxon>Metazoa</taxon>
        <taxon>Chordata</taxon>
        <taxon>Craniata</taxon>
        <taxon>Vertebrata</taxon>
        <taxon>Euteleostomi</taxon>
        <taxon>Mammalia</taxon>
        <taxon>Eutheria</taxon>
        <taxon>Euarchontoglires</taxon>
        <taxon>Primates</taxon>
        <taxon>Haplorrhini</taxon>
        <taxon>Catarrhini</taxon>
        <taxon>Hominidae</taxon>
        <taxon>Homo</taxon>
    </lineage>
</organism>
<reference key="1">
    <citation type="journal article" date="2001" name="Genome Res.">
        <title>Towards a catalog of human genes and proteins: sequencing and analysis of 500 novel complete protein coding human cDNAs.</title>
        <authorList>
            <person name="Wiemann S."/>
            <person name="Weil B."/>
            <person name="Wellenreuther R."/>
            <person name="Gassenhuber J."/>
            <person name="Glassl S."/>
            <person name="Ansorge W."/>
            <person name="Boecher M."/>
            <person name="Bloecker H."/>
            <person name="Bauersachs S."/>
            <person name="Blum H."/>
            <person name="Lauber J."/>
            <person name="Duesterhoeft A."/>
            <person name="Beyer A."/>
            <person name="Koehrer K."/>
            <person name="Strack N."/>
            <person name="Mewes H.-W."/>
            <person name="Ottenwaelder B."/>
            <person name="Obermaier B."/>
            <person name="Tampe J."/>
            <person name="Heubner D."/>
            <person name="Wambutt R."/>
            <person name="Korn B."/>
            <person name="Klein M."/>
            <person name="Poustka A."/>
        </authorList>
    </citation>
    <scope>NUCLEOTIDE SEQUENCE [LARGE SCALE MRNA]</scope>
    <scope>VARIANT ARG-400</scope>
    <source>
        <tissue>Brain</tissue>
    </source>
</reference>
<reference key="2">
    <citation type="journal article" date="2004" name="Nat. Genet.">
        <title>Complete sequencing and characterization of 21,243 full-length human cDNAs.</title>
        <authorList>
            <person name="Ota T."/>
            <person name="Suzuki Y."/>
            <person name="Nishikawa T."/>
            <person name="Otsuki T."/>
            <person name="Sugiyama T."/>
            <person name="Irie R."/>
            <person name="Wakamatsu A."/>
            <person name="Hayashi K."/>
            <person name="Sato H."/>
            <person name="Nagai K."/>
            <person name="Kimura K."/>
            <person name="Makita H."/>
            <person name="Sekine M."/>
            <person name="Obayashi M."/>
            <person name="Nishi T."/>
            <person name="Shibahara T."/>
            <person name="Tanaka T."/>
            <person name="Ishii S."/>
            <person name="Yamamoto J."/>
            <person name="Saito K."/>
            <person name="Kawai Y."/>
            <person name="Isono Y."/>
            <person name="Nakamura Y."/>
            <person name="Nagahari K."/>
            <person name="Murakami K."/>
            <person name="Yasuda T."/>
            <person name="Iwayanagi T."/>
            <person name="Wagatsuma M."/>
            <person name="Shiratori A."/>
            <person name="Sudo H."/>
            <person name="Hosoiri T."/>
            <person name="Kaku Y."/>
            <person name="Kodaira H."/>
            <person name="Kondo H."/>
            <person name="Sugawara M."/>
            <person name="Takahashi M."/>
            <person name="Kanda K."/>
            <person name="Yokoi T."/>
            <person name="Furuya T."/>
            <person name="Kikkawa E."/>
            <person name="Omura Y."/>
            <person name="Abe K."/>
            <person name="Kamihara K."/>
            <person name="Katsuta N."/>
            <person name="Sato K."/>
            <person name="Tanikawa M."/>
            <person name="Yamazaki M."/>
            <person name="Ninomiya K."/>
            <person name="Ishibashi T."/>
            <person name="Yamashita H."/>
            <person name="Murakawa K."/>
            <person name="Fujimori K."/>
            <person name="Tanai H."/>
            <person name="Kimata M."/>
            <person name="Watanabe M."/>
            <person name="Hiraoka S."/>
            <person name="Chiba Y."/>
            <person name="Ishida S."/>
            <person name="Ono Y."/>
            <person name="Takiguchi S."/>
            <person name="Watanabe S."/>
            <person name="Yosida M."/>
            <person name="Hotuta T."/>
            <person name="Kusano J."/>
            <person name="Kanehori K."/>
            <person name="Takahashi-Fujii A."/>
            <person name="Hara H."/>
            <person name="Tanase T.-O."/>
            <person name="Nomura Y."/>
            <person name="Togiya S."/>
            <person name="Komai F."/>
            <person name="Hara R."/>
            <person name="Takeuchi K."/>
            <person name="Arita M."/>
            <person name="Imose N."/>
            <person name="Musashino K."/>
            <person name="Yuuki H."/>
            <person name="Oshima A."/>
            <person name="Sasaki N."/>
            <person name="Aotsuka S."/>
            <person name="Yoshikawa Y."/>
            <person name="Matsunawa H."/>
            <person name="Ichihara T."/>
            <person name="Shiohata N."/>
            <person name="Sano S."/>
            <person name="Moriya S."/>
            <person name="Momiyama H."/>
            <person name="Satoh N."/>
            <person name="Takami S."/>
            <person name="Terashima Y."/>
            <person name="Suzuki O."/>
            <person name="Nakagawa S."/>
            <person name="Senoh A."/>
            <person name="Mizoguchi H."/>
            <person name="Goto Y."/>
            <person name="Shimizu F."/>
            <person name="Wakebe H."/>
            <person name="Hishigaki H."/>
            <person name="Watanabe T."/>
            <person name="Sugiyama A."/>
            <person name="Takemoto M."/>
            <person name="Kawakami B."/>
            <person name="Yamazaki M."/>
            <person name="Watanabe K."/>
            <person name="Kumagai A."/>
            <person name="Itakura S."/>
            <person name="Fukuzumi Y."/>
            <person name="Fujimori Y."/>
            <person name="Komiyama M."/>
            <person name="Tashiro H."/>
            <person name="Tanigami A."/>
            <person name="Fujiwara T."/>
            <person name="Ono T."/>
            <person name="Yamada K."/>
            <person name="Fujii Y."/>
            <person name="Ozaki K."/>
            <person name="Hirao M."/>
            <person name="Ohmori Y."/>
            <person name="Kawabata A."/>
            <person name="Hikiji T."/>
            <person name="Kobatake N."/>
            <person name="Inagaki H."/>
            <person name="Ikema Y."/>
            <person name="Okamoto S."/>
            <person name="Okitani R."/>
            <person name="Kawakami T."/>
            <person name="Noguchi S."/>
            <person name="Itoh T."/>
            <person name="Shigeta K."/>
            <person name="Senba T."/>
            <person name="Matsumura K."/>
            <person name="Nakajima Y."/>
            <person name="Mizuno T."/>
            <person name="Morinaga M."/>
            <person name="Sasaki M."/>
            <person name="Togashi T."/>
            <person name="Oyama M."/>
            <person name="Hata H."/>
            <person name="Watanabe M."/>
            <person name="Komatsu T."/>
            <person name="Mizushima-Sugano J."/>
            <person name="Satoh T."/>
            <person name="Shirai Y."/>
            <person name="Takahashi Y."/>
            <person name="Nakagawa K."/>
            <person name="Okumura K."/>
            <person name="Nagase T."/>
            <person name="Nomura N."/>
            <person name="Kikuchi H."/>
            <person name="Masuho Y."/>
            <person name="Yamashita R."/>
            <person name="Nakai K."/>
            <person name="Yada T."/>
            <person name="Nakamura Y."/>
            <person name="Ohara O."/>
            <person name="Isogai T."/>
            <person name="Sugano S."/>
        </authorList>
    </citation>
    <scope>NUCLEOTIDE SEQUENCE [LARGE SCALE MRNA]</scope>
    <source>
        <tissue>Cerebellum</tissue>
    </source>
</reference>
<reference key="3">
    <citation type="journal article" date="2006" name="Nature">
        <title>The DNA sequence, annotation and analysis of human chromosome 3.</title>
        <authorList>
            <person name="Muzny D.M."/>
            <person name="Scherer S.E."/>
            <person name="Kaul R."/>
            <person name="Wang J."/>
            <person name="Yu J."/>
            <person name="Sudbrak R."/>
            <person name="Buhay C.J."/>
            <person name="Chen R."/>
            <person name="Cree A."/>
            <person name="Ding Y."/>
            <person name="Dugan-Rocha S."/>
            <person name="Gill R."/>
            <person name="Gunaratne P."/>
            <person name="Harris R.A."/>
            <person name="Hawes A.C."/>
            <person name="Hernandez J."/>
            <person name="Hodgson A.V."/>
            <person name="Hume J."/>
            <person name="Jackson A."/>
            <person name="Khan Z.M."/>
            <person name="Kovar-Smith C."/>
            <person name="Lewis L.R."/>
            <person name="Lozado R.J."/>
            <person name="Metzker M.L."/>
            <person name="Milosavljevic A."/>
            <person name="Miner G.R."/>
            <person name="Morgan M.B."/>
            <person name="Nazareth L.V."/>
            <person name="Scott G."/>
            <person name="Sodergren E."/>
            <person name="Song X.-Z."/>
            <person name="Steffen D."/>
            <person name="Wei S."/>
            <person name="Wheeler D.A."/>
            <person name="Wright M.W."/>
            <person name="Worley K.C."/>
            <person name="Yuan Y."/>
            <person name="Zhang Z."/>
            <person name="Adams C.Q."/>
            <person name="Ansari-Lari M.A."/>
            <person name="Ayele M."/>
            <person name="Brown M.J."/>
            <person name="Chen G."/>
            <person name="Chen Z."/>
            <person name="Clendenning J."/>
            <person name="Clerc-Blankenburg K.P."/>
            <person name="Chen R."/>
            <person name="Chen Z."/>
            <person name="Davis C."/>
            <person name="Delgado O."/>
            <person name="Dinh H.H."/>
            <person name="Dong W."/>
            <person name="Draper H."/>
            <person name="Ernst S."/>
            <person name="Fu G."/>
            <person name="Gonzalez-Garay M.L."/>
            <person name="Garcia D.K."/>
            <person name="Gillett W."/>
            <person name="Gu J."/>
            <person name="Hao B."/>
            <person name="Haugen E."/>
            <person name="Havlak P."/>
            <person name="He X."/>
            <person name="Hennig S."/>
            <person name="Hu S."/>
            <person name="Huang W."/>
            <person name="Jackson L.R."/>
            <person name="Jacob L.S."/>
            <person name="Kelly S.H."/>
            <person name="Kube M."/>
            <person name="Levy R."/>
            <person name="Li Z."/>
            <person name="Liu B."/>
            <person name="Liu J."/>
            <person name="Liu W."/>
            <person name="Lu J."/>
            <person name="Maheshwari M."/>
            <person name="Nguyen B.-V."/>
            <person name="Okwuonu G.O."/>
            <person name="Palmeiri A."/>
            <person name="Pasternak S."/>
            <person name="Perez L.M."/>
            <person name="Phelps K.A."/>
            <person name="Plopper F.J."/>
            <person name="Qiang B."/>
            <person name="Raymond C."/>
            <person name="Rodriguez R."/>
            <person name="Saenphimmachak C."/>
            <person name="Santibanez J."/>
            <person name="Shen H."/>
            <person name="Shen Y."/>
            <person name="Subramanian S."/>
            <person name="Tabor P.E."/>
            <person name="Verduzco D."/>
            <person name="Waldron L."/>
            <person name="Wang J."/>
            <person name="Wang J."/>
            <person name="Wang Q."/>
            <person name="Williams G.A."/>
            <person name="Wong G.K.-S."/>
            <person name="Yao Z."/>
            <person name="Zhang J."/>
            <person name="Zhang X."/>
            <person name="Zhao G."/>
            <person name="Zhou J."/>
            <person name="Zhou Y."/>
            <person name="Nelson D."/>
            <person name="Lehrach H."/>
            <person name="Reinhardt R."/>
            <person name="Naylor S.L."/>
            <person name="Yang H."/>
            <person name="Olson M."/>
            <person name="Weinstock G."/>
            <person name="Gibbs R.A."/>
        </authorList>
    </citation>
    <scope>NUCLEOTIDE SEQUENCE [LARGE SCALE GENOMIC DNA]</scope>
</reference>
<reference key="4">
    <citation type="submission" date="2005-09" db="EMBL/GenBank/DDBJ databases">
        <authorList>
            <person name="Mural R.J."/>
            <person name="Istrail S."/>
            <person name="Sutton G.G."/>
            <person name="Florea L."/>
            <person name="Halpern A.L."/>
            <person name="Mobarry C.M."/>
            <person name="Lippert R."/>
            <person name="Walenz B."/>
            <person name="Shatkay H."/>
            <person name="Dew I."/>
            <person name="Miller J.R."/>
            <person name="Flanigan M.J."/>
            <person name="Edwards N.J."/>
            <person name="Bolanos R."/>
            <person name="Fasulo D."/>
            <person name="Halldorsson B.V."/>
            <person name="Hannenhalli S."/>
            <person name="Turner R."/>
            <person name="Yooseph S."/>
            <person name="Lu F."/>
            <person name="Nusskern D.R."/>
            <person name="Shue B.C."/>
            <person name="Zheng X.H."/>
            <person name="Zhong F."/>
            <person name="Delcher A.L."/>
            <person name="Huson D.H."/>
            <person name="Kravitz S.A."/>
            <person name="Mouchard L."/>
            <person name="Reinert K."/>
            <person name="Remington K.A."/>
            <person name="Clark A.G."/>
            <person name="Waterman M.S."/>
            <person name="Eichler E.E."/>
            <person name="Adams M.D."/>
            <person name="Hunkapiller M.W."/>
            <person name="Myers E.W."/>
            <person name="Venter J.C."/>
        </authorList>
    </citation>
    <scope>NUCLEOTIDE SEQUENCE [LARGE SCALE GENOMIC DNA]</scope>
    <scope>VARIANT ARG-400</scope>
</reference>
<reference key="5">
    <citation type="journal article" date="2004" name="Genome Res.">
        <title>The status, quality, and expansion of the NIH full-length cDNA project: the Mammalian Gene Collection (MGC).</title>
        <authorList>
            <consortium name="The MGC Project Team"/>
        </authorList>
    </citation>
    <scope>NUCLEOTIDE SEQUENCE [LARGE SCALE MRNA]</scope>
    <scope>VARIANT ARG-400</scope>
    <source>
        <tissue>Brain</tissue>
    </source>
</reference>
<reference key="6">
    <citation type="journal article" date="2006" name="Cell">
        <title>Global, in vivo, and site-specific phosphorylation dynamics in signaling networks.</title>
        <authorList>
            <person name="Olsen J.V."/>
            <person name="Blagoev B."/>
            <person name="Gnad F."/>
            <person name="Macek B."/>
            <person name="Kumar C."/>
            <person name="Mortensen P."/>
            <person name="Mann M."/>
        </authorList>
    </citation>
    <scope>PHOSPHORYLATION [LARGE SCALE ANALYSIS] AT SER-409</scope>
    <scope>VARIANT [LARGE SCALE ANALYSIS] ARG-400</scope>
    <scope>IDENTIFICATION BY MASS SPECTROMETRY [LARGE SCALE ANALYSIS]</scope>
    <source>
        <tissue>Cervix carcinoma</tissue>
    </source>
</reference>
<reference key="7">
    <citation type="journal article" date="2008" name="Mol. Cell">
        <title>Kinase-selective enrichment enables quantitative phosphoproteomics of the kinome across the cell cycle.</title>
        <authorList>
            <person name="Daub H."/>
            <person name="Olsen J.V."/>
            <person name="Bairlein M."/>
            <person name="Gnad F."/>
            <person name="Oppermann F.S."/>
            <person name="Korner R."/>
            <person name="Greff Z."/>
            <person name="Keri G."/>
            <person name="Stemmann O."/>
            <person name="Mann M."/>
        </authorList>
    </citation>
    <scope>PHOSPHORYLATION [LARGE SCALE ANALYSIS] AT SER-409</scope>
    <scope>VARIANT [LARGE SCALE ANALYSIS] ARG-400</scope>
    <scope>IDENTIFICATION BY MASS SPECTROMETRY [LARGE SCALE ANALYSIS]</scope>
    <source>
        <tissue>Cervix carcinoma</tissue>
    </source>
</reference>
<reference key="8">
    <citation type="journal article" date="2009" name="Oncol. Rep.">
        <title>Involvement of TMEM22 overexpression in the growth of renal cell carcinoma cells.</title>
        <authorList>
            <person name="Dobashi S."/>
            <person name="Katagiri T."/>
            <person name="Hirota E."/>
            <person name="Ashida S."/>
            <person name="Daigo Y."/>
            <person name="Shuin T."/>
            <person name="Fujioka T."/>
            <person name="Miki T."/>
            <person name="Nakamura Y."/>
        </authorList>
    </citation>
    <scope>SUBCELLULAR LOCATION</scope>
    <scope>TOPOLOGY</scope>
    <scope>INTERACTION WITH RAB37</scope>
</reference>
<reference key="9">
    <citation type="journal article" date="2013" name="J. Proteome Res.">
        <title>Toward a comprehensive characterization of a human cancer cell phosphoproteome.</title>
        <authorList>
            <person name="Zhou H."/>
            <person name="Di Palma S."/>
            <person name="Preisinger C."/>
            <person name="Peng M."/>
            <person name="Polat A.N."/>
            <person name="Heck A.J."/>
            <person name="Mohammed S."/>
        </authorList>
    </citation>
    <scope>PHOSPHORYLATION [LARGE SCALE ANALYSIS] AT SER-409</scope>
    <scope>VARIANT [LARGE SCALE ANALYSIS] ARG-400</scope>
    <scope>IDENTIFICATION BY MASS SPECTROMETRY [LARGE SCALE ANALYSIS]</scope>
    <source>
        <tissue>Cervix carcinoma</tissue>
    </source>
</reference>
<reference key="10">
    <citation type="journal article" date="2021" name="Elife">
        <title>Localization, proteomics, and metabolite profiling reveal a putative vesicular transporter for UDP-glucose.</title>
        <authorList>
            <person name="Qian C."/>
            <person name="Wu Z."/>
            <person name="Sun R."/>
            <person name="Yu H."/>
            <person name="Zeng J."/>
            <person name="Rao Y."/>
            <person name="Li Y."/>
        </authorList>
    </citation>
    <scope>SUBCELLULAR LOCATION</scope>
</reference>